<comment type="function">
    <text evidence="5">Essential component of the TIM23 complex, a complex that mediates the translocation of transit peptide-containing proteins across the mitochondrial inner membrane. Required to direct preproteins in transit and direct them to the channel protein tim23, and possibly facilitates transfer of the translocating proteins from the TOM complex to the TIM23 complex.</text>
</comment>
<comment type="subunit">
    <text evidence="1 6">Component of the TIM23 complex, at least composed of tim23, tim17, tim50 and tim21 (Probable). Interacts with preproteins in transit (By similarity).</text>
</comment>
<comment type="subcellular location">
    <subcellularLocation>
        <location evidence="5">Mitochondrion inner membrane</location>
        <topology evidence="5">Single-pass membrane protein</topology>
    </subcellularLocation>
</comment>
<comment type="similarity">
    <text evidence="6">Belongs to the TIM50 family.</text>
</comment>
<organism>
    <name type="scientific">Neurospora crassa (strain ATCC 24698 / 74-OR23-1A / CBS 708.71 / DSM 1257 / FGSC 987)</name>
    <dbReference type="NCBI Taxonomy" id="367110"/>
    <lineage>
        <taxon>Eukaryota</taxon>
        <taxon>Fungi</taxon>
        <taxon>Dikarya</taxon>
        <taxon>Ascomycota</taxon>
        <taxon>Pezizomycotina</taxon>
        <taxon>Sordariomycetes</taxon>
        <taxon>Sordariomycetidae</taxon>
        <taxon>Sordariales</taxon>
        <taxon>Sordariaceae</taxon>
        <taxon>Neurospora</taxon>
    </lineage>
</organism>
<evidence type="ECO:0000250" key="1"/>
<evidence type="ECO:0000255" key="2"/>
<evidence type="ECO:0000255" key="3">
    <source>
        <dbReference type="PROSITE-ProRule" id="PRU00336"/>
    </source>
</evidence>
<evidence type="ECO:0000256" key="4">
    <source>
        <dbReference type="SAM" id="MobiDB-lite"/>
    </source>
</evidence>
<evidence type="ECO:0000269" key="5">
    <source>
    </source>
</evidence>
<evidence type="ECO:0000305" key="6"/>
<reference key="1">
    <citation type="journal article" date="2003" name="EMBO J.">
        <title>Tim50, a novel component of the TIM23 preprotein translocase of mitochondria.</title>
        <authorList>
            <person name="Mokranjac D."/>
            <person name="Paschen S.A."/>
            <person name="Kozany C."/>
            <person name="Prokisch H."/>
            <person name="Hoppins S.C."/>
            <person name="Nargang F.E."/>
            <person name="Neupert W."/>
            <person name="Hell K."/>
        </authorList>
    </citation>
    <scope>NUCLEOTIDE SEQUENCE [MRNA]</scope>
    <scope>PROTEIN SEQUENCE OF N-TERMINUS</scope>
    <scope>IDENTIFICATION BY MASS SPECTROMETRY</scope>
    <scope>IDENTIFICATION IN THE TIM23 COMPLEX</scope>
    <scope>FUNCTION</scope>
    <scope>SUBCELLULAR LOCATION</scope>
    <scope>TOPOLOGY</scope>
</reference>
<reference key="2">
    <citation type="journal article" date="2003" name="Nature">
        <title>The genome sequence of the filamentous fungus Neurospora crassa.</title>
        <authorList>
            <person name="Galagan J.E."/>
            <person name="Calvo S.E."/>
            <person name="Borkovich K.A."/>
            <person name="Selker E.U."/>
            <person name="Read N.D."/>
            <person name="Jaffe D.B."/>
            <person name="FitzHugh W."/>
            <person name="Ma L.-J."/>
            <person name="Smirnov S."/>
            <person name="Purcell S."/>
            <person name="Rehman B."/>
            <person name="Elkins T."/>
            <person name="Engels R."/>
            <person name="Wang S."/>
            <person name="Nielsen C.B."/>
            <person name="Butler J."/>
            <person name="Endrizzi M."/>
            <person name="Qui D."/>
            <person name="Ianakiev P."/>
            <person name="Bell-Pedersen D."/>
            <person name="Nelson M.A."/>
            <person name="Werner-Washburne M."/>
            <person name="Selitrennikoff C.P."/>
            <person name="Kinsey J.A."/>
            <person name="Braun E.L."/>
            <person name="Zelter A."/>
            <person name="Schulte U."/>
            <person name="Kothe G.O."/>
            <person name="Jedd G."/>
            <person name="Mewes H.-W."/>
            <person name="Staben C."/>
            <person name="Marcotte E."/>
            <person name="Greenberg D."/>
            <person name="Roy A."/>
            <person name="Foley K."/>
            <person name="Naylor J."/>
            <person name="Stange-Thomann N."/>
            <person name="Barrett R."/>
            <person name="Gnerre S."/>
            <person name="Kamal M."/>
            <person name="Kamvysselis M."/>
            <person name="Mauceli E.W."/>
            <person name="Bielke C."/>
            <person name="Rudd S."/>
            <person name="Frishman D."/>
            <person name="Krystofova S."/>
            <person name="Rasmussen C."/>
            <person name="Metzenberg R.L."/>
            <person name="Perkins D.D."/>
            <person name="Kroken S."/>
            <person name="Cogoni C."/>
            <person name="Macino G."/>
            <person name="Catcheside D.E.A."/>
            <person name="Li W."/>
            <person name="Pratt R.J."/>
            <person name="Osmani S.A."/>
            <person name="DeSouza C.P.C."/>
            <person name="Glass N.L."/>
            <person name="Orbach M.J."/>
            <person name="Berglund J.A."/>
            <person name="Voelker R."/>
            <person name="Yarden O."/>
            <person name="Plamann M."/>
            <person name="Seiler S."/>
            <person name="Dunlap J.C."/>
            <person name="Radford A."/>
            <person name="Aramayo R."/>
            <person name="Natvig D.O."/>
            <person name="Alex L.A."/>
            <person name="Mannhaupt G."/>
            <person name="Ebbole D.J."/>
            <person name="Freitag M."/>
            <person name="Paulsen I."/>
            <person name="Sachs M.S."/>
            <person name="Lander E.S."/>
            <person name="Nusbaum C."/>
            <person name="Birren B.W."/>
        </authorList>
    </citation>
    <scope>NUCLEOTIDE SEQUENCE [LARGE SCALE GENOMIC DNA]</scope>
    <source>
        <strain>ATCC 24698 / 74-OR23-1A / CBS 708.71 / DSM 1257 / FGSC 987</strain>
    </source>
</reference>
<sequence length="540" mass="60593">MMLSRAAVRSIAGARVAAHAASPLLSQRTLPAVWTRSMAKDNKPPKFSKPESTPAQKATPKAPEPAESEKAEQKQQQQQQQQTPAESEPEPEIDLSKLPDLRGGIPTTLEYEMAQKEAGKKPVAGEEAETQAEGAEGPEAATSGSGGGGRKKGQLPDSAYVSSTEKRRQKMANWAFIAAGLALVGGTIYLGREWDEEELEKHHDIPNGWGLGLWWKRAKARMTGTVSYYQEPAFEKLLPDPDPSFERPYTLCISLEDMLVHSEWTRDHGWRLAKRPGVDYFLRYLSQYYEIVLFTSVPFANAEPIVRKMDPYRFIMWPLFREATKYKDGEIVKDLSYLNRDLSKVIIIDTDPKHVRAQPENAIVLPKWKGDPKDTELVSLVPFLEFIHTMNFPDVRKVLKSFEGQHIPTEFARREAIARAEHNKLVAAKAKKAGLGSLGARFGIKPSKLNPMAMEGEEDPSEAFAKGKMIQDIARERGMRNYLAMEEEIKKNGEMWLKMEQEAQEKAQKEMMKNMQSSVFGWFGGAPSGEQQSGESEKKA</sequence>
<dbReference type="EMBL" id="AY188754">
    <property type="protein sequence ID" value="AAO32939.1"/>
    <property type="molecule type" value="mRNA"/>
</dbReference>
<dbReference type="EMBL" id="CM002236">
    <property type="protein sequence ID" value="EAA36389.3"/>
    <property type="molecule type" value="Genomic_DNA"/>
</dbReference>
<dbReference type="RefSeq" id="XP_965625.3">
    <property type="nucleotide sequence ID" value="XM_960532.3"/>
</dbReference>
<dbReference type="SMR" id="Q874C1"/>
<dbReference type="FunCoup" id="Q874C1">
    <property type="interactions" value="441"/>
</dbReference>
<dbReference type="STRING" id="367110.Q874C1"/>
<dbReference type="PaxDb" id="5141-EFNCRP00000002384"/>
<dbReference type="EnsemblFungi" id="EAA36389">
    <property type="protein sequence ID" value="EAA36389"/>
    <property type="gene ID" value="NCU02943"/>
</dbReference>
<dbReference type="GeneID" id="3881750"/>
<dbReference type="KEGG" id="ncr:NCU02943"/>
<dbReference type="VEuPathDB" id="FungiDB:NCU02943"/>
<dbReference type="HOGENOM" id="CLU_023309_0_0_1"/>
<dbReference type="InParanoid" id="Q874C1"/>
<dbReference type="OrthoDB" id="287041at2759"/>
<dbReference type="Proteomes" id="UP000001805">
    <property type="component" value="Chromosome 1, Linkage Group I"/>
</dbReference>
<dbReference type="GO" id="GO:0005744">
    <property type="term" value="C:TIM23 mitochondrial import inner membrane translocase complex"/>
    <property type="evidence" value="ECO:0000318"/>
    <property type="project" value="GO_Central"/>
</dbReference>
<dbReference type="GO" id="GO:0030150">
    <property type="term" value="P:protein import into mitochondrial matrix"/>
    <property type="evidence" value="ECO:0000318"/>
    <property type="project" value="GO_Central"/>
</dbReference>
<dbReference type="CDD" id="cd07521">
    <property type="entry name" value="HAD_FCP1-like"/>
    <property type="match status" value="1"/>
</dbReference>
<dbReference type="FunFam" id="3.40.50.1000:FF:000019">
    <property type="entry name" value="Mitochondrial import inner membrane translocase subunit TIM50"/>
    <property type="match status" value="1"/>
</dbReference>
<dbReference type="Gene3D" id="3.40.50.1000">
    <property type="entry name" value="HAD superfamily/HAD-like"/>
    <property type="match status" value="1"/>
</dbReference>
<dbReference type="InterPro" id="IPR004274">
    <property type="entry name" value="FCP1_dom"/>
</dbReference>
<dbReference type="InterPro" id="IPR036412">
    <property type="entry name" value="HAD-like_sf"/>
</dbReference>
<dbReference type="InterPro" id="IPR023214">
    <property type="entry name" value="HAD_sf"/>
</dbReference>
<dbReference type="InterPro" id="IPR050365">
    <property type="entry name" value="TIM50"/>
</dbReference>
<dbReference type="PANTHER" id="PTHR12210">
    <property type="entry name" value="DULLARD PROTEIN PHOSPHATASE"/>
    <property type="match status" value="1"/>
</dbReference>
<dbReference type="Pfam" id="PF03031">
    <property type="entry name" value="NIF"/>
    <property type="match status" value="1"/>
</dbReference>
<dbReference type="SMART" id="SM00577">
    <property type="entry name" value="CPDc"/>
    <property type="match status" value="1"/>
</dbReference>
<dbReference type="SUPFAM" id="SSF56784">
    <property type="entry name" value="HAD-like"/>
    <property type="match status" value="1"/>
</dbReference>
<dbReference type="PROSITE" id="PS50969">
    <property type="entry name" value="FCP1"/>
    <property type="match status" value="1"/>
</dbReference>
<gene>
    <name type="primary">tim50</name>
    <name type="ORF">NCU02943</name>
</gene>
<keyword id="KW-0903">Direct protein sequencing</keyword>
<keyword id="KW-0472">Membrane</keyword>
<keyword id="KW-0496">Mitochondrion</keyword>
<keyword id="KW-0999">Mitochondrion inner membrane</keyword>
<keyword id="KW-0653">Protein transport</keyword>
<keyword id="KW-1185">Reference proteome</keyword>
<keyword id="KW-0809">Transit peptide</keyword>
<keyword id="KW-0811">Translocation</keyword>
<keyword id="KW-0812">Transmembrane</keyword>
<keyword id="KW-1133">Transmembrane helix</keyword>
<keyword id="KW-0813">Transport</keyword>
<feature type="transit peptide" description="Mitochondrion" evidence="5">
    <location>
        <begin position="1"/>
        <end position="38"/>
    </location>
</feature>
<feature type="chain" id="PRO_0000043134" description="Mitochondrial import inner membrane translocase subunit tim50">
    <location>
        <begin position="39"/>
        <end position="540"/>
    </location>
</feature>
<feature type="topological domain" description="Mitochondrial matrix" evidence="2">
    <location>
        <begin position="39"/>
        <end position="171"/>
    </location>
</feature>
<feature type="transmembrane region" description="Helical" evidence="2">
    <location>
        <begin position="172"/>
        <end position="191"/>
    </location>
</feature>
<feature type="topological domain" description="Mitochondrial intermembrane" evidence="2">
    <location>
        <begin position="192"/>
        <end position="540"/>
    </location>
</feature>
<feature type="domain" description="FCP1 homology" evidence="3">
    <location>
        <begin position="244"/>
        <end position="387"/>
    </location>
</feature>
<feature type="region of interest" description="Disordered" evidence="4">
    <location>
        <begin position="35"/>
        <end position="164"/>
    </location>
</feature>
<feature type="region of interest" description="Disordered" evidence="4">
    <location>
        <begin position="519"/>
        <end position="540"/>
    </location>
</feature>
<feature type="compositionally biased region" description="Low complexity" evidence="4">
    <location>
        <begin position="52"/>
        <end position="61"/>
    </location>
</feature>
<feature type="compositionally biased region" description="Low complexity" evidence="4">
    <location>
        <begin position="74"/>
        <end position="86"/>
    </location>
</feature>
<feature type="compositionally biased region" description="Basic and acidic residues" evidence="4">
    <location>
        <begin position="113"/>
        <end position="124"/>
    </location>
</feature>
<feature type="compositionally biased region" description="Low complexity" evidence="4">
    <location>
        <begin position="131"/>
        <end position="143"/>
    </location>
</feature>
<protein>
    <recommendedName>
        <fullName>Mitochondrial import inner membrane translocase subunit tim50</fullName>
    </recommendedName>
</protein>
<accession>Q874C1</accession>
<accession>Q7SHG1</accession>
<name>TIM50_NEUCR</name>
<proteinExistence type="evidence at protein level"/>